<name>TIG_ECOSM</name>
<accession>B1LJJ3</accession>
<organism>
    <name type="scientific">Escherichia coli (strain SMS-3-5 / SECEC)</name>
    <dbReference type="NCBI Taxonomy" id="439855"/>
    <lineage>
        <taxon>Bacteria</taxon>
        <taxon>Pseudomonadati</taxon>
        <taxon>Pseudomonadota</taxon>
        <taxon>Gammaproteobacteria</taxon>
        <taxon>Enterobacterales</taxon>
        <taxon>Enterobacteriaceae</taxon>
        <taxon>Escherichia</taxon>
    </lineage>
</organism>
<evidence type="ECO:0000255" key="1">
    <source>
        <dbReference type="HAMAP-Rule" id="MF_00303"/>
    </source>
</evidence>
<dbReference type="EC" id="5.2.1.8" evidence="1"/>
<dbReference type="EMBL" id="CP000970">
    <property type="protein sequence ID" value="ACB18025.1"/>
    <property type="molecule type" value="Genomic_DNA"/>
</dbReference>
<dbReference type="RefSeq" id="WP_001198386.1">
    <property type="nucleotide sequence ID" value="NC_010498.1"/>
</dbReference>
<dbReference type="BMRB" id="B1LJJ3"/>
<dbReference type="SMR" id="B1LJJ3"/>
<dbReference type="GeneID" id="75202861"/>
<dbReference type="KEGG" id="ecm:EcSMS35_0479"/>
<dbReference type="HOGENOM" id="CLU_033058_2_0_6"/>
<dbReference type="Proteomes" id="UP000007011">
    <property type="component" value="Chromosome"/>
</dbReference>
<dbReference type="GO" id="GO:0005737">
    <property type="term" value="C:cytoplasm"/>
    <property type="evidence" value="ECO:0007669"/>
    <property type="project" value="UniProtKB-SubCell"/>
</dbReference>
<dbReference type="GO" id="GO:0003755">
    <property type="term" value="F:peptidyl-prolyl cis-trans isomerase activity"/>
    <property type="evidence" value="ECO:0007669"/>
    <property type="project" value="UniProtKB-UniRule"/>
</dbReference>
<dbReference type="GO" id="GO:0044183">
    <property type="term" value="F:protein folding chaperone"/>
    <property type="evidence" value="ECO:0007669"/>
    <property type="project" value="TreeGrafter"/>
</dbReference>
<dbReference type="GO" id="GO:0043022">
    <property type="term" value="F:ribosome binding"/>
    <property type="evidence" value="ECO:0007669"/>
    <property type="project" value="TreeGrafter"/>
</dbReference>
<dbReference type="GO" id="GO:0051083">
    <property type="term" value="P:'de novo' cotranslational protein folding"/>
    <property type="evidence" value="ECO:0007669"/>
    <property type="project" value="TreeGrafter"/>
</dbReference>
<dbReference type="GO" id="GO:0051301">
    <property type="term" value="P:cell division"/>
    <property type="evidence" value="ECO:0007669"/>
    <property type="project" value="UniProtKB-KW"/>
</dbReference>
<dbReference type="GO" id="GO:0061077">
    <property type="term" value="P:chaperone-mediated protein folding"/>
    <property type="evidence" value="ECO:0007669"/>
    <property type="project" value="TreeGrafter"/>
</dbReference>
<dbReference type="GO" id="GO:0015031">
    <property type="term" value="P:protein transport"/>
    <property type="evidence" value="ECO:0007669"/>
    <property type="project" value="UniProtKB-UniRule"/>
</dbReference>
<dbReference type="GO" id="GO:0043335">
    <property type="term" value="P:protein unfolding"/>
    <property type="evidence" value="ECO:0007669"/>
    <property type="project" value="TreeGrafter"/>
</dbReference>
<dbReference type="FunFam" id="1.10.3120.10:FF:000001">
    <property type="entry name" value="Trigger factor"/>
    <property type="match status" value="1"/>
</dbReference>
<dbReference type="FunFam" id="3.10.50.40:FF:000001">
    <property type="entry name" value="Trigger factor"/>
    <property type="match status" value="1"/>
</dbReference>
<dbReference type="FunFam" id="3.30.70.1050:FF:000001">
    <property type="entry name" value="Trigger factor"/>
    <property type="match status" value="1"/>
</dbReference>
<dbReference type="Gene3D" id="3.10.50.40">
    <property type="match status" value="1"/>
</dbReference>
<dbReference type="Gene3D" id="3.30.70.1050">
    <property type="entry name" value="Trigger factor ribosome-binding domain"/>
    <property type="match status" value="1"/>
</dbReference>
<dbReference type="Gene3D" id="1.10.3120.10">
    <property type="entry name" value="Trigger factor, C-terminal domain"/>
    <property type="match status" value="1"/>
</dbReference>
<dbReference type="HAMAP" id="MF_00303">
    <property type="entry name" value="Trigger_factor_Tig"/>
    <property type="match status" value="1"/>
</dbReference>
<dbReference type="InterPro" id="IPR046357">
    <property type="entry name" value="PPIase_dom_sf"/>
</dbReference>
<dbReference type="InterPro" id="IPR001179">
    <property type="entry name" value="PPIase_FKBP_dom"/>
</dbReference>
<dbReference type="InterPro" id="IPR005215">
    <property type="entry name" value="Trig_fac"/>
</dbReference>
<dbReference type="InterPro" id="IPR008880">
    <property type="entry name" value="Trigger_fac_C"/>
</dbReference>
<dbReference type="InterPro" id="IPR037041">
    <property type="entry name" value="Trigger_fac_C_sf"/>
</dbReference>
<dbReference type="InterPro" id="IPR008881">
    <property type="entry name" value="Trigger_fac_ribosome-bd_bac"/>
</dbReference>
<dbReference type="InterPro" id="IPR036611">
    <property type="entry name" value="Trigger_fac_ribosome-bd_sf"/>
</dbReference>
<dbReference type="InterPro" id="IPR027304">
    <property type="entry name" value="Trigger_fact/SurA_dom_sf"/>
</dbReference>
<dbReference type="NCBIfam" id="TIGR00115">
    <property type="entry name" value="tig"/>
    <property type="match status" value="1"/>
</dbReference>
<dbReference type="PANTHER" id="PTHR30560">
    <property type="entry name" value="TRIGGER FACTOR CHAPERONE AND PEPTIDYL-PROLYL CIS/TRANS ISOMERASE"/>
    <property type="match status" value="1"/>
</dbReference>
<dbReference type="PANTHER" id="PTHR30560:SF3">
    <property type="entry name" value="TRIGGER FACTOR-LIKE PROTEIN TIG, CHLOROPLASTIC"/>
    <property type="match status" value="1"/>
</dbReference>
<dbReference type="Pfam" id="PF00254">
    <property type="entry name" value="FKBP_C"/>
    <property type="match status" value="1"/>
</dbReference>
<dbReference type="Pfam" id="PF05698">
    <property type="entry name" value="Trigger_C"/>
    <property type="match status" value="1"/>
</dbReference>
<dbReference type="Pfam" id="PF05697">
    <property type="entry name" value="Trigger_N"/>
    <property type="match status" value="1"/>
</dbReference>
<dbReference type="PIRSF" id="PIRSF003095">
    <property type="entry name" value="Trigger_factor"/>
    <property type="match status" value="1"/>
</dbReference>
<dbReference type="SUPFAM" id="SSF54534">
    <property type="entry name" value="FKBP-like"/>
    <property type="match status" value="1"/>
</dbReference>
<dbReference type="SUPFAM" id="SSF109998">
    <property type="entry name" value="Triger factor/SurA peptide-binding domain-like"/>
    <property type="match status" value="1"/>
</dbReference>
<dbReference type="SUPFAM" id="SSF102735">
    <property type="entry name" value="Trigger factor ribosome-binding domain"/>
    <property type="match status" value="1"/>
</dbReference>
<dbReference type="PROSITE" id="PS50059">
    <property type="entry name" value="FKBP_PPIASE"/>
    <property type="match status" value="1"/>
</dbReference>
<protein>
    <recommendedName>
        <fullName evidence="1">Trigger factor</fullName>
        <shortName evidence="1">TF</shortName>
        <ecNumber evidence="1">5.2.1.8</ecNumber>
    </recommendedName>
    <alternativeName>
        <fullName evidence="1">PPIase</fullName>
    </alternativeName>
</protein>
<keyword id="KW-0131">Cell cycle</keyword>
<keyword id="KW-0132">Cell division</keyword>
<keyword id="KW-0143">Chaperone</keyword>
<keyword id="KW-0963">Cytoplasm</keyword>
<keyword id="KW-0413">Isomerase</keyword>
<keyword id="KW-0697">Rotamase</keyword>
<proteinExistence type="inferred from homology"/>
<reference key="1">
    <citation type="journal article" date="2008" name="J. Bacteriol.">
        <title>Insights into the environmental resistance gene pool from the genome sequence of the multidrug-resistant environmental isolate Escherichia coli SMS-3-5.</title>
        <authorList>
            <person name="Fricke W.F."/>
            <person name="Wright M.S."/>
            <person name="Lindell A.H."/>
            <person name="Harkins D.M."/>
            <person name="Baker-Austin C."/>
            <person name="Ravel J."/>
            <person name="Stepanauskas R."/>
        </authorList>
    </citation>
    <scope>NUCLEOTIDE SEQUENCE [LARGE SCALE GENOMIC DNA]</scope>
    <source>
        <strain>SMS-3-5 / SECEC</strain>
    </source>
</reference>
<feature type="chain" id="PRO_1000119519" description="Trigger factor">
    <location>
        <begin position="1"/>
        <end position="432"/>
    </location>
</feature>
<feature type="domain" description="PPIase FKBP-type" evidence="1">
    <location>
        <begin position="161"/>
        <end position="246"/>
    </location>
</feature>
<comment type="function">
    <text evidence="1">Involved in protein export. Acts as a chaperone by maintaining the newly synthesized protein in an open conformation. Functions as a peptidyl-prolyl cis-trans isomerase.</text>
</comment>
<comment type="catalytic activity">
    <reaction evidence="1">
        <text>[protein]-peptidylproline (omega=180) = [protein]-peptidylproline (omega=0)</text>
        <dbReference type="Rhea" id="RHEA:16237"/>
        <dbReference type="Rhea" id="RHEA-COMP:10747"/>
        <dbReference type="Rhea" id="RHEA-COMP:10748"/>
        <dbReference type="ChEBI" id="CHEBI:83833"/>
        <dbReference type="ChEBI" id="CHEBI:83834"/>
        <dbReference type="EC" id="5.2.1.8"/>
    </reaction>
</comment>
<comment type="subunit">
    <text evidence="1">Homodimer and monomer. In vivo most of the ribosomes are in complex with monomeric TF. Uncomplexed TF, however, is in a monomer-dimer equilibrium with approximately two thirds of TF existing in a dimeric state.</text>
</comment>
<comment type="subcellular location">
    <subcellularLocation>
        <location>Cytoplasm</location>
    </subcellularLocation>
    <text evidence="1">About half TF is bound to the ribosome near the polypeptide exit tunnel while the other half is free in the cytoplasm.</text>
</comment>
<comment type="domain">
    <text evidence="1">Consists of 3 domains; the N-terminus binds the ribosome, the middle domain has PPIase activity, while the C-terminus has intrinsic chaperone activity on its own.</text>
</comment>
<comment type="similarity">
    <text evidence="1">Belongs to the FKBP-type PPIase family. Tig subfamily.</text>
</comment>
<gene>
    <name evidence="1" type="primary">tig</name>
    <name type="ordered locus">EcSMS35_0479</name>
</gene>
<sequence length="432" mass="48193">MQVSVETTQGLGRRVTITIAADSIETAVKSELVNVAKKVRIDGFRKGKVPMNIVAQRYGASVRQDVLGDLMSRNFIDAIIKEKINPAGAPTYVPGEYKLGEDFTYSVEFEVYPEVELQGLEAIEVEKPIVEVTDADVDGMLDTLRKQQATWKEKDGAVEAEDRVTIDFTGSVDGEEFEGGKASDFVLAMGQGRMIPGFEDGIKGHKAGEEFTIDVTFPEEYHAENLKGKAAKFAINLKKVEERELPELTAEFIKRFGVEDGSVEGLRAEVRKNMERELKSAIRNRVKSQAIEGLVKANDIDVPAALIDSEIDVLRRQAAQRFGGNEKQALELPRELFEEQAKRRVVVGLLLGEVIRTNELKADEERVKGLIEEMASAYEDPKEVIEFYSKNKELMDNMRNVALEEQAVEAVLAKAKVTEKETTFNELMNQQA</sequence>